<reference key="1">
    <citation type="journal article" date="1992" name="Genes Dev.">
        <title>Deadpan, an essential pan-neural gene in Drosophila, encodes a helix-loop-helix protein similar to the hairy gene product.</title>
        <authorList>
            <person name="Bier E."/>
            <person name="Vaessin H."/>
            <person name="Younger-Shepherd S."/>
            <person name="Jan L.Y."/>
            <person name="Jan Y.N."/>
        </authorList>
    </citation>
    <scope>NUCLEOTIDE SEQUENCE [MRNA]</scope>
    <scope>FUNCTION</scope>
    <scope>SUBCELLULAR LOCATION</scope>
    <scope>DEVELOPMENTAL STAGE</scope>
    <scope>DISRUPTION PHENOTYPE</scope>
</reference>
<reference key="2">
    <citation type="journal article" date="2000" name="Science">
        <title>The genome sequence of Drosophila melanogaster.</title>
        <authorList>
            <person name="Adams M.D."/>
            <person name="Celniker S.E."/>
            <person name="Holt R.A."/>
            <person name="Evans C.A."/>
            <person name="Gocayne J.D."/>
            <person name="Amanatides P.G."/>
            <person name="Scherer S.E."/>
            <person name="Li P.W."/>
            <person name="Hoskins R.A."/>
            <person name="Galle R.F."/>
            <person name="George R.A."/>
            <person name="Lewis S.E."/>
            <person name="Richards S."/>
            <person name="Ashburner M."/>
            <person name="Henderson S.N."/>
            <person name="Sutton G.G."/>
            <person name="Wortman J.R."/>
            <person name="Yandell M.D."/>
            <person name="Zhang Q."/>
            <person name="Chen L.X."/>
            <person name="Brandon R.C."/>
            <person name="Rogers Y.-H.C."/>
            <person name="Blazej R.G."/>
            <person name="Champe M."/>
            <person name="Pfeiffer B.D."/>
            <person name="Wan K.H."/>
            <person name="Doyle C."/>
            <person name="Baxter E.G."/>
            <person name="Helt G."/>
            <person name="Nelson C.R."/>
            <person name="Miklos G.L.G."/>
            <person name="Abril J.F."/>
            <person name="Agbayani A."/>
            <person name="An H.-J."/>
            <person name="Andrews-Pfannkoch C."/>
            <person name="Baldwin D."/>
            <person name="Ballew R.M."/>
            <person name="Basu A."/>
            <person name="Baxendale J."/>
            <person name="Bayraktaroglu L."/>
            <person name="Beasley E.M."/>
            <person name="Beeson K.Y."/>
            <person name="Benos P.V."/>
            <person name="Berman B.P."/>
            <person name="Bhandari D."/>
            <person name="Bolshakov S."/>
            <person name="Borkova D."/>
            <person name="Botchan M.R."/>
            <person name="Bouck J."/>
            <person name="Brokstein P."/>
            <person name="Brottier P."/>
            <person name="Burtis K.C."/>
            <person name="Busam D.A."/>
            <person name="Butler H."/>
            <person name="Cadieu E."/>
            <person name="Center A."/>
            <person name="Chandra I."/>
            <person name="Cherry J.M."/>
            <person name="Cawley S."/>
            <person name="Dahlke C."/>
            <person name="Davenport L.B."/>
            <person name="Davies P."/>
            <person name="de Pablos B."/>
            <person name="Delcher A."/>
            <person name="Deng Z."/>
            <person name="Mays A.D."/>
            <person name="Dew I."/>
            <person name="Dietz S.M."/>
            <person name="Dodson K."/>
            <person name="Doup L.E."/>
            <person name="Downes M."/>
            <person name="Dugan-Rocha S."/>
            <person name="Dunkov B.C."/>
            <person name="Dunn P."/>
            <person name="Durbin K.J."/>
            <person name="Evangelista C.C."/>
            <person name="Ferraz C."/>
            <person name="Ferriera S."/>
            <person name="Fleischmann W."/>
            <person name="Fosler C."/>
            <person name="Gabrielian A.E."/>
            <person name="Garg N.S."/>
            <person name="Gelbart W.M."/>
            <person name="Glasser K."/>
            <person name="Glodek A."/>
            <person name="Gong F."/>
            <person name="Gorrell J.H."/>
            <person name="Gu Z."/>
            <person name="Guan P."/>
            <person name="Harris M."/>
            <person name="Harris N.L."/>
            <person name="Harvey D.A."/>
            <person name="Heiman T.J."/>
            <person name="Hernandez J.R."/>
            <person name="Houck J."/>
            <person name="Hostin D."/>
            <person name="Houston K.A."/>
            <person name="Howland T.J."/>
            <person name="Wei M.-H."/>
            <person name="Ibegwam C."/>
            <person name="Jalali M."/>
            <person name="Kalush F."/>
            <person name="Karpen G.H."/>
            <person name="Ke Z."/>
            <person name="Kennison J.A."/>
            <person name="Ketchum K.A."/>
            <person name="Kimmel B.E."/>
            <person name="Kodira C.D."/>
            <person name="Kraft C.L."/>
            <person name="Kravitz S."/>
            <person name="Kulp D."/>
            <person name="Lai Z."/>
            <person name="Lasko P."/>
            <person name="Lei Y."/>
            <person name="Levitsky A.A."/>
            <person name="Li J.H."/>
            <person name="Li Z."/>
            <person name="Liang Y."/>
            <person name="Lin X."/>
            <person name="Liu X."/>
            <person name="Mattei B."/>
            <person name="McIntosh T.C."/>
            <person name="McLeod M.P."/>
            <person name="McPherson D."/>
            <person name="Merkulov G."/>
            <person name="Milshina N.V."/>
            <person name="Mobarry C."/>
            <person name="Morris J."/>
            <person name="Moshrefi A."/>
            <person name="Mount S.M."/>
            <person name="Moy M."/>
            <person name="Murphy B."/>
            <person name="Murphy L."/>
            <person name="Muzny D.M."/>
            <person name="Nelson D.L."/>
            <person name="Nelson D.R."/>
            <person name="Nelson K.A."/>
            <person name="Nixon K."/>
            <person name="Nusskern D.R."/>
            <person name="Pacleb J.M."/>
            <person name="Palazzolo M."/>
            <person name="Pittman G.S."/>
            <person name="Pan S."/>
            <person name="Pollard J."/>
            <person name="Puri V."/>
            <person name="Reese M.G."/>
            <person name="Reinert K."/>
            <person name="Remington K."/>
            <person name="Saunders R.D.C."/>
            <person name="Scheeler F."/>
            <person name="Shen H."/>
            <person name="Shue B.C."/>
            <person name="Siden-Kiamos I."/>
            <person name="Simpson M."/>
            <person name="Skupski M.P."/>
            <person name="Smith T.J."/>
            <person name="Spier E."/>
            <person name="Spradling A.C."/>
            <person name="Stapleton M."/>
            <person name="Strong R."/>
            <person name="Sun E."/>
            <person name="Svirskas R."/>
            <person name="Tector C."/>
            <person name="Turner R."/>
            <person name="Venter E."/>
            <person name="Wang A.H."/>
            <person name="Wang X."/>
            <person name="Wang Z.-Y."/>
            <person name="Wassarman D.A."/>
            <person name="Weinstock G.M."/>
            <person name="Weissenbach J."/>
            <person name="Williams S.M."/>
            <person name="Woodage T."/>
            <person name="Worley K.C."/>
            <person name="Wu D."/>
            <person name="Yang S."/>
            <person name="Yao Q.A."/>
            <person name="Ye J."/>
            <person name="Yeh R.-F."/>
            <person name="Zaveri J.S."/>
            <person name="Zhan M."/>
            <person name="Zhang G."/>
            <person name="Zhao Q."/>
            <person name="Zheng L."/>
            <person name="Zheng X.H."/>
            <person name="Zhong F.N."/>
            <person name="Zhong W."/>
            <person name="Zhou X."/>
            <person name="Zhu S.C."/>
            <person name="Zhu X."/>
            <person name="Smith H.O."/>
            <person name="Gibbs R.A."/>
            <person name="Myers E.W."/>
            <person name="Rubin G.M."/>
            <person name="Venter J.C."/>
        </authorList>
    </citation>
    <scope>NUCLEOTIDE SEQUENCE [LARGE SCALE GENOMIC DNA]</scope>
    <source>
        <strain>Berkeley</strain>
    </source>
</reference>
<reference key="3">
    <citation type="journal article" date="2002" name="Genome Biol.">
        <title>Annotation of the Drosophila melanogaster euchromatic genome: a systematic review.</title>
        <authorList>
            <person name="Misra S."/>
            <person name="Crosby M.A."/>
            <person name="Mungall C.J."/>
            <person name="Matthews B.B."/>
            <person name="Campbell K.S."/>
            <person name="Hradecky P."/>
            <person name="Huang Y."/>
            <person name="Kaminker J.S."/>
            <person name="Millburn G.H."/>
            <person name="Prochnik S.E."/>
            <person name="Smith C.D."/>
            <person name="Tupy J.L."/>
            <person name="Whitfield E.J."/>
            <person name="Bayraktaroglu L."/>
            <person name="Berman B.P."/>
            <person name="Bettencourt B.R."/>
            <person name="Celniker S.E."/>
            <person name="de Grey A.D.N.J."/>
            <person name="Drysdale R.A."/>
            <person name="Harris N.L."/>
            <person name="Richter J."/>
            <person name="Russo S."/>
            <person name="Schroeder A.J."/>
            <person name="Shu S.Q."/>
            <person name="Stapleton M."/>
            <person name="Yamada C."/>
            <person name="Ashburner M."/>
            <person name="Gelbart W.M."/>
            <person name="Rubin G.M."/>
            <person name="Lewis S.E."/>
        </authorList>
    </citation>
    <scope>GENOME REANNOTATION</scope>
    <source>
        <strain>Berkeley</strain>
    </source>
</reference>
<reference key="4">
    <citation type="journal article" date="2002" name="Genome Biol.">
        <title>A Drosophila full-length cDNA resource.</title>
        <authorList>
            <person name="Stapleton M."/>
            <person name="Carlson J.W."/>
            <person name="Brokstein P."/>
            <person name="Yu C."/>
            <person name="Champe M."/>
            <person name="George R.A."/>
            <person name="Guarin H."/>
            <person name="Kronmiller B."/>
            <person name="Pacleb J.M."/>
            <person name="Park S."/>
            <person name="Wan K.H."/>
            <person name="Rubin G.M."/>
            <person name="Celniker S.E."/>
        </authorList>
    </citation>
    <scope>NUCLEOTIDE SEQUENCE [LARGE SCALE MRNA]</scope>
    <source>
        <strain>Berkeley</strain>
        <tissue>Embryo</tissue>
    </source>
</reference>
<reference key="5">
    <citation type="journal article" date="1994" name="Cell">
        <title>Groucho is required for Drosophila neurogenesis, segmentation, and sex determination and interacts directly with hairy-related bHLH proteins.</title>
        <authorList>
            <person name="Paroush Z."/>
            <person name="Finley R.L. Jr."/>
            <person name="Kidd T."/>
            <person name="Wainwright S.M."/>
            <person name="Ingham P.W."/>
            <person name="Brent R."/>
            <person name="Ish-Horowicz D."/>
        </authorList>
    </citation>
    <scope>FUNCTION</scope>
    <scope>INTERACTION WITH GRO</scope>
    <scope>DOMAIN WRPW MOTIF</scope>
</reference>
<reference key="6">
    <citation type="journal article" date="1995" name="Mol. Gen. Genet.">
        <title>Protein-protein interactions among components of the Drosophila primary sex determination signal.</title>
        <authorList>
            <person name="Liu Y."/>
            <person name="Belote J.M."/>
        </authorList>
    </citation>
    <scope>FUNCTION</scope>
    <scope>SUBUNIT</scope>
    <scope>INTERACTION WITH SISA AND DA</scope>
</reference>
<reference key="7">
    <citation type="journal article" date="2008" name="J. Proteome Res.">
        <title>Phosphoproteome analysis of Drosophila melanogaster embryos.</title>
        <authorList>
            <person name="Zhai B."/>
            <person name="Villen J."/>
            <person name="Beausoleil S.A."/>
            <person name="Mintseris J."/>
            <person name="Gygi S.P."/>
        </authorList>
    </citation>
    <scope>PHOSPHORYLATION [LARGE SCALE ANALYSIS] AT SER-407; SER-408 AND SER-411</scope>
    <scope>IDENTIFICATION BY MASS SPECTROMETRY</scope>
    <source>
        <tissue>Embryo</tissue>
    </source>
</reference>
<reference key="8">
    <citation type="journal article" date="2011" name="Dev. Biol.">
        <title>The bHLH factor deadpan is a direct target of Notch signaling and regulates neuroblast self-renewal in Drosophila.</title>
        <authorList>
            <person name="San-Juan B.P."/>
            <person name="Baonza A."/>
        </authorList>
    </citation>
    <scope>FUNCTION</scope>
    <scope>DISRUPTION PHENOTYPE</scope>
</reference>
<reference key="9">
    <citation type="journal article" date="2012" name="Development">
        <title>bHLH-O proteins are crucial for Drosophila neuroblast self-renewal and mediate Notch-induced overproliferation.</title>
        <authorList>
            <person name="Zacharioudaki E."/>
            <person name="Magadi S.S."/>
            <person name="Delidakis C."/>
        </authorList>
    </citation>
    <scope>FUNCTION</scope>
    <scope>SUBUNIT</scope>
    <scope>INTERACTION WITH E(SPL)MGAMMA-HLH</scope>
    <scope>DEVELOPMENTAL STAGE</scope>
    <scope>DISRUPTION PHENOTYPE</scope>
</reference>
<reference key="10">
    <citation type="journal article" date="2012" name="PLoS ONE">
        <title>The bHLH repressor Deadpan regulates the self-renewal and specification of Drosophila larval neural stem cells independently of Notch.</title>
        <authorList>
            <person name="Zhu S."/>
            <person name="Wildonger J."/>
            <person name="Barshow S."/>
            <person name="Younger S."/>
            <person name="Huang Y."/>
            <person name="Lee T."/>
        </authorList>
    </citation>
    <scope>FUNCTION</scope>
    <scope>DISRUPTION PHENOTYPE</scope>
</reference>
<reference key="11">
    <citation type="journal article" date="2014" name="Elife">
        <title>The Brm-HDAC3-Erm repressor complex suppresses dedifferentiation in Drosophila type II neuroblast lineages.</title>
        <authorList>
            <person name="Koe C.T."/>
            <person name="Li S."/>
            <person name="Rossi F."/>
            <person name="Wong J.J."/>
            <person name="Wang Y."/>
            <person name="Zhang Z."/>
            <person name="Chen K."/>
            <person name="Aw S.S."/>
            <person name="Richardson H.E."/>
            <person name="Robson P."/>
            <person name="Sung W.K."/>
            <person name="Yu F."/>
            <person name="Gonzalez C."/>
            <person name="Wang H."/>
        </authorList>
    </citation>
    <scope>FUNCTION</scope>
</reference>
<reference key="12">
    <citation type="journal article" date="2017" name="Dev. Biol.">
        <title>bHLH-O proteins balance the self-renewal and differentiation of Drosophila neural stem cells by regulating Earmuff expression.</title>
        <authorList>
            <person name="Li X."/>
            <person name="Chen R."/>
            <person name="Zhu S."/>
        </authorList>
    </citation>
    <scope>FUNCTION</scope>
    <scope>DISRUPTION PHENOTYPE</scope>
</reference>
<accession>Q26263</accession>
<accession>Q9V384</accession>
<keyword id="KW-0217">Developmental protein</keyword>
<keyword id="KW-0221">Differentiation</keyword>
<keyword id="KW-0238">DNA-binding</keyword>
<keyword id="KW-0524">Neurogenesis</keyword>
<keyword id="KW-0539">Nucleus</keyword>
<keyword id="KW-0597">Phosphoprotein</keyword>
<keyword id="KW-1185">Reference proteome</keyword>
<keyword id="KW-0678">Repressor</keyword>
<keyword id="KW-0804">Transcription</keyword>
<keyword id="KW-0805">Transcription regulation</keyword>
<sequence length="435" mass="46551">MDYKNDINSDDDFDCSNGYSDSYGSNGRMSNPNGLSKAELRKTNKPIMEKRRRARINHCLNELKSLILEAMKKDPARHTKLEKADILEMTVKHLQSVQRQQLNMAIQSDPSVVQKFKTGFVECAEEVNRYVSQMDGIDTGVRQRLSAHLNQCANSLEQIGSMSNFSNGYRGGLFPATAVTAAPTPLFPSLPQDLNNNSRTESSAPAIQMGGLQLIPSRLPSGEFALIMPNTGSAAPPPGPFAWPGSAAGVAAGTASAALASIANPTHLNDYTQSFRMSAFSKPVNTSVPANLPENLIHTLPGQTQLPVKNSTSPPLSPISSISSHCEESRAASPTVDVMSKHSFAGVFSTPPPTSAETSFNTSGSLNLSAGSHDSSGCSRPLAHLQQQQVSSTSGIAKRDREAEAESSDCSLDEPSSKKFLAGAIEKSSSAWRPW</sequence>
<name>DPN_DROME</name>
<feature type="chain" id="PRO_0000127168" description="Protein deadpan">
    <location>
        <begin position="1"/>
        <end position="435"/>
    </location>
</feature>
<feature type="domain" description="bHLH" evidence="2">
    <location>
        <begin position="40"/>
        <end position="97"/>
    </location>
</feature>
<feature type="domain" description="Orange" evidence="1">
    <location>
        <begin position="116"/>
        <end position="149"/>
    </location>
</feature>
<feature type="region of interest" description="Disordered" evidence="3">
    <location>
        <begin position="18"/>
        <end position="48"/>
    </location>
</feature>
<feature type="region of interest" description="Disordered" evidence="3">
    <location>
        <begin position="305"/>
        <end position="334"/>
    </location>
</feature>
<feature type="region of interest" description="Disordered" evidence="3">
    <location>
        <begin position="349"/>
        <end position="416"/>
    </location>
</feature>
<feature type="short sequence motif" description="WRPW motif">
    <location>
        <begin position="432"/>
        <end position="435"/>
    </location>
</feature>
<feature type="compositionally biased region" description="Low complexity" evidence="3">
    <location>
        <begin position="18"/>
        <end position="27"/>
    </location>
</feature>
<feature type="compositionally biased region" description="Low complexity" evidence="3">
    <location>
        <begin position="311"/>
        <end position="324"/>
    </location>
</feature>
<feature type="compositionally biased region" description="Polar residues" evidence="3">
    <location>
        <begin position="355"/>
        <end position="378"/>
    </location>
</feature>
<feature type="compositionally biased region" description="Polar residues" evidence="3">
    <location>
        <begin position="385"/>
        <end position="395"/>
    </location>
</feature>
<feature type="modified residue" description="Phosphoserine" evidence="5">
    <location>
        <position position="407"/>
    </location>
</feature>
<feature type="modified residue" description="Phosphoserine" evidence="5">
    <location>
        <position position="408"/>
    </location>
</feature>
<feature type="modified residue" description="Phosphoserine" evidence="5">
    <location>
        <position position="411"/>
    </location>
</feature>
<feature type="sequence conflict" description="In Ref. 1; AAB24149." evidence="13" ref="1">
    <original>M</original>
    <variation>L</variation>
    <location>
        <position position="339"/>
    </location>
</feature>
<gene>
    <name type="primary">dpn</name>
    <name type="ORF">CG8704</name>
</gene>
<dbReference type="EMBL" id="S48025">
    <property type="protein sequence ID" value="AAB24149.1"/>
    <property type="molecule type" value="mRNA"/>
</dbReference>
<dbReference type="EMBL" id="AE013599">
    <property type="protein sequence ID" value="AAF59113.1"/>
    <property type="molecule type" value="Genomic_DNA"/>
</dbReference>
<dbReference type="EMBL" id="AY071330">
    <property type="protein sequence ID" value="AAL48952.1"/>
    <property type="molecule type" value="mRNA"/>
</dbReference>
<dbReference type="RefSeq" id="NP_476923.1">
    <property type="nucleotide sequence ID" value="NM_057575.3"/>
</dbReference>
<dbReference type="SMR" id="Q26263"/>
<dbReference type="BioGRID" id="61654">
    <property type="interactions" value="26"/>
</dbReference>
<dbReference type="DIP" id="DIP-19436N"/>
<dbReference type="ELM" id="Q26263"/>
<dbReference type="FunCoup" id="Q26263">
    <property type="interactions" value="11"/>
</dbReference>
<dbReference type="IntAct" id="Q26263">
    <property type="interactions" value="9"/>
</dbReference>
<dbReference type="STRING" id="7227.FBpp0087879"/>
<dbReference type="GlyGen" id="Q26263">
    <property type="glycosylation" value="2 sites"/>
</dbReference>
<dbReference type="iPTMnet" id="Q26263"/>
<dbReference type="PaxDb" id="7227-FBpp0087879"/>
<dbReference type="EnsemblMetazoa" id="FBtr0088803">
    <property type="protein sequence ID" value="FBpp0087879"/>
    <property type="gene ID" value="FBgn0010109"/>
</dbReference>
<dbReference type="GeneID" id="35800"/>
<dbReference type="KEGG" id="dme:Dmel_CG8704"/>
<dbReference type="UCSC" id="CG8704-RA">
    <property type="organism name" value="d. melanogaster"/>
</dbReference>
<dbReference type="AGR" id="FB:FBgn0010109"/>
<dbReference type="CTD" id="35800"/>
<dbReference type="FlyBase" id="FBgn0010109">
    <property type="gene designation" value="dpn"/>
</dbReference>
<dbReference type="VEuPathDB" id="VectorBase:FBgn0010109"/>
<dbReference type="eggNOG" id="KOG4304">
    <property type="taxonomic scope" value="Eukaryota"/>
</dbReference>
<dbReference type="GeneTree" id="ENSGT00940000166705"/>
<dbReference type="HOGENOM" id="CLU_036128_0_0_1"/>
<dbReference type="InParanoid" id="Q26263"/>
<dbReference type="OMA" id="YVSQMDG"/>
<dbReference type="OrthoDB" id="6085656at2759"/>
<dbReference type="PhylomeDB" id="Q26263"/>
<dbReference type="SignaLink" id="Q26263"/>
<dbReference type="BioGRID-ORCS" id="35800">
    <property type="hits" value="0 hits in 3 CRISPR screens"/>
</dbReference>
<dbReference type="GenomeRNAi" id="35800"/>
<dbReference type="PRO" id="PR:Q26263"/>
<dbReference type="Proteomes" id="UP000000803">
    <property type="component" value="Chromosome 2R"/>
</dbReference>
<dbReference type="Bgee" id="FBgn0010109">
    <property type="expression patterns" value="Expressed in polar follicle cell (Drosophila) in ovary and 35 other cell types or tissues"/>
</dbReference>
<dbReference type="GO" id="GO:0005829">
    <property type="term" value="C:cytosol"/>
    <property type="evidence" value="ECO:0000314"/>
    <property type="project" value="FlyBase"/>
</dbReference>
<dbReference type="GO" id="GO:0005634">
    <property type="term" value="C:nucleus"/>
    <property type="evidence" value="ECO:0000314"/>
    <property type="project" value="FlyBase"/>
</dbReference>
<dbReference type="GO" id="GO:0000987">
    <property type="term" value="F:cis-regulatory region sequence-specific DNA binding"/>
    <property type="evidence" value="ECO:0000314"/>
    <property type="project" value="UniProtKB"/>
</dbReference>
<dbReference type="GO" id="GO:0003677">
    <property type="term" value="F:DNA binding"/>
    <property type="evidence" value="ECO:0000314"/>
    <property type="project" value="FlyBase"/>
</dbReference>
<dbReference type="GO" id="GO:0003700">
    <property type="term" value="F:DNA-binding transcription factor activity"/>
    <property type="evidence" value="ECO:0000315"/>
    <property type="project" value="UniProtKB"/>
</dbReference>
<dbReference type="GO" id="GO:0001227">
    <property type="term" value="F:DNA-binding transcription repressor activity, RNA polymerase II-specific"/>
    <property type="evidence" value="ECO:0000314"/>
    <property type="project" value="FlyBase"/>
</dbReference>
<dbReference type="GO" id="GO:0046983">
    <property type="term" value="F:protein dimerization activity"/>
    <property type="evidence" value="ECO:0007669"/>
    <property type="project" value="InterPro"/>
</dbReference>
<dbReference type="GO" id="GO:0000978">
    <property type="term" value="F:RNA polymerase II cis-regulatory region sequence-specific DNA binding"/>
    <property type="evidence" value="ECO:0000318"/>
    <property type="project" value="GO_Central"/>
</dbReference>
<dbReference type="GO" id="GO:0043565">
    <property type="term" value="F:sequence-specific DNA binding"/>
    <property type="evidence" value="ECO:0000314"/>
    <property type="project" value="UniProtKB"/>
</dbReference>
<dbReference type="GO" id="GO:1990837">
    <property type="term" value="F:sequence-specific double-stranded DNA binding"/>
    <property type="evidence" value="ECO:0000314"/>
    <property type="project" value="UniProtKB"/>
</dbReference>
<dbReference type="GO" id="GO:0008344">
    <property type="term" value="P:adult locomotory behavior"/>
    <property type="evidence" value="ECO:0000315"/>
    <property type="project" value="FlyBase"/>
</dbReference>
<dbReference type="GO" id="GO:0008345">
    <property type="term" value="P:larval locomotory behavior"/>
    <property type="evidence" value="ECO:0000315"/>
    <property type="project" value="FlyBase"/>
</dbReference>
<dbReference type="GO" id="GO:0010629">
    <property type="term" value="P:negative regulation of gene expression"/>
    <property type="evidence" value="ECO:0000315"/>
    <property type="project" value="UniProtKB"/>
</dbReference>
<dbReference type="GO" id="GO:0000122">
    <property type="term" value="P:negative regulation of transcription by RNA polymerase II"/>
    <property type="evidence" value="ECO:0000314"/>
    <property type="project" value="FlyBase"/>
</dbReference>
<dbReference type="GO" id="GO:0014019">
    <property type="term" value="P:neuroblast development"/>
    <property type="evidence" value="ECO:0000315"/>
    <property type="project" value="UniProtKB"/>
</dbReference>
<dbReference type="GO" id="GO:0045840">
    <property type="term" value="P:positive regulation of mitotic nuclear division"/>
    <property type="evidence" value="ECO:0000315"/>
    <property type="project" value="FlyBase"/>
</dbReference>
<dbReference type="GO" id="GO:0002052">
    <property type="term" value="P:positive regulation of neuroblast proliferation"/>
    <property type="evidence" value="ECO:0000315"/>
    <property type="project" value="UniProtKB"/>
</dbReference>
<dbReference type="GO" id="GO:0007465">
    <property type="term" value="P:R7 cell fate commitment"/>
    <property type="evidence" value="ECO:0000315"/>
    <property type="project" value="FlyBase"/>
</dbReference>
<dbReference type="GO" id="GO:1902692">
    <property type="term" value="P:regulation of neuroblast proliferation"/>
    <property type="evidence" value="ECO:0000315"/>
    <property type="project" value="UniProtKB"/>
</dbReference>
<dbReference type="GO" id="GO:0050767">
    <property type="term" value="P:regulation of neurogenesis"/>
    <property type="evidence" value="ECO:0000318"/>
    <property type="project" value="GO_Central"/>
</dbReference>
<dbReference type="GO" id="GO:0007540">
    <property type="term" value="P:sex determination, establishment of X:A ratio"/>
    <property type="evidence" value="ECO:0000315"/>
    <property type="project" value="FlyBase"/>
</dbReference>
<dbReference type="GO" id="GO:0007549">
    <property type="term" value="P:sex-chromosome dosage compensation"/>
    <property type="evidence" value="ECO:0000315"/>
    <property type="project" value="FlyBase"/>
</dbReference>
<dbReference type="CDD" id="cd18913">
    <property type="entry name" value="bHLH-O_hairy_like"/>
    <property type="match status" value="1"/>
</dbReference>
<dbReference type="FunFam" id="4.10.280.10:FF:000009">
    <property type="entry name" value="Transcription factor HES-1"/>
    <property type="match status" value="1"/>
</dbReference>
<dbReference type="Gene3D" id="6.10.250.980">
    <property type="match status" value="1"/>
</dbReference>
<dbReference type="Gene3D" id="4.10.280.10">
    <property type="entry name" value="Helix-loop-helix DNA-binding domain"/>
    <property type="match status" value="1"/>
</dbReference>
<dbReference type="InterPro" id="IPR011598">
    <property type="entry name" value="bHLH_dom"/>
</dbReference>
<dbReference type="InterPro" id="IPR050370">
    <property type="entry name" value="HES_HEY"/>
</dbReference>
<dbReference type="InterPro" id="IPR036638">
    <property type="entry name" value="HLH_DNA-bd_sf"/>
</dbReference>
<dbReference type="InterPro" id="IPR003650">
    <property type="entry name" value="Orange_dom"/>
</dbReference>
<dbReference type="PANTHER" id="PTHR10985">
    <property type="entry name" value="BASIC HELIX-LOOP-HELIX TRANSCRIPTION FACTOR, HES-RELATED"/>
    <property type="match status" value="1"/>
</dbReference>
<dbReference type="Pfam" id="PF07527">
    <property type="entry name" value="Hairy_orange"/>
    <property type="match status" value="1"/>
</dbReference>
<dbReference type="Pfam" id="PF00010">
    <property type="entry name" value="HLH"/>
    <property type="match status" value="1"/>
</dbReference>
<dbReference type="SMART" id="SM00353">
    <property type="entry name" value="HLH"/>
    <property type="match status" value="1"/>
</dbReference>
<dbReference type="SMART" id="SM00511">
    <property type="entry name" value="ORANGE"/>
    <property type="match status" value="1"/>
</dbReference>
<dbReference type="SUPFAM" id="SSF47459">
    <property type="entry name" value="HLH, helix-loop-helix DNA-binding domain"/>
    <property type="match status" value="1"/>
</dbReference>
<dbReference type="SUPFAM" id="SSF158457">
    <property type="entry name" value="Orange domain-like"/>
    <property type="match status" value="1"/>
</dbReference>
<dbReference type="PROSITE" id="PS50888">
    <property type="entry name" value="BHLH"/>
    <property type="match status" value="1"/>
</dbReference>
<dbReference type="PROSITE" id="PS51054">
    <property type="entry name" value="ORANGE"/>
    <property type="match status" value="1"/>
</dbReference>
<organism>
    <name type="scientific">Drosophila melanogaster</name>
    <name type="common">Fruit fly</name>
    <dbReference type="NCBI Taxonomy" id="7227"/>
    <lineage>
        <taxon>Eukaryota</taxon>
        <taxon>Metazoa</taxon>
        <taxon>Ecdysozoa</taxon>
        <taxon>Arthropoda</taxon>
        <taxon>Hexapoda</taxon>
        <taxon>Insecta</taxon>
        <taxon>Pterygota</taxon>
        <taxon>Neoptera</taxon>
        <taxon>Endopterygota</taxon>
        <taxon>Diptera</taxon>
        <taxon>Brachycera</taxon>
        <taxon>Muscomorpha</taxon>
        <taxon>Ephydroidea</taxon>
        <taxon>Drosophilidae</taxon>
        <taxon>Drosophila</taxon>
        <taxon>Sophophora</taxon>
    </lineage>
</organism>
<proteinExistence type="evidence at protein level"/>
<evidence type="ECO:0000255" key="1">
    <source>
        <dbReference type="PROSITE-ProRule" id="PRU00380"/>
    </source>
</evidence>
<evidence type="ECO:0000255" key="2">
    <source>
        <dbReference type="PROSITE-ProRule" id="PRU00981"/>
    </source>
</evidence>
<evidence type="ECO:0000256" key="3">
    <source>
        <dbReference type="SAM" id="MobiDB-lite"/>
    </source>
</evidence>
<evidence type="ECO:0000269" key="4">
    <source>
    </source>
</evidence>
<evidence type="ECO:0000269" key="5">
    <source>
    </source>
</evidence>
<evidence type="ECO:0000269" key="6">
    <source>
    </source>
</evidence>
<evidence type="ECO:0000269" key="7">
    <source>
    </source>
</evidence>
<evidence type="ECO:0000269" key="8">
    <source>
    </source>
</evidence>
<evidence type="ECO:0000269" key="9">
    <source>
    </source>
</evidence>
<evidence type="ECO:0000269" key="10">
    <source>
    </source>
</evidence>
<evidence type="ECO:0000269" key="11">
    <source>
    </source>
</evidence>
<evidence type="ECO:0000269" key="12">
    <source>
    </source>
</evidence>
<evidence type="ECO:0000305" key="13"/>
<comment type="function">
    <text evidence="4 6 7 8 9 10 11 12">Transcriptional repressor of genes that require a bHLH protein for their transcription (PubMed:1427077, PubMed:24618901, PubMed:28899667). In the larval brain, required to maintain the self-renewal and identity of type II neuroblasts by regulating the expression of the transcriptional repressor erm together with other self-renewal transcriptional repressors such as klu and E(spl)mgamma-HLH (PubMed:21262215, PubMed:22357926, PubMed:23056424, PubMed:24618901, PubMed:28899667). As part of its role in neuroblasts development, has been shown to be a direct target of the Notch signaling pathway, however might work also independently of N/Notch (PubMed:21262215, PubMed:22357926, PubMed:23056424). In the developing larval and pupal brain, required for mushroom body differentiation (PubMed:22357926). Involved in sex determination and SXL transcription repression when in complex with the corepressor protein Groucho (PubMed:7651341, PubMed:8001118).</text>
</comment>
<comment type="subunit">
    <text evidence="7 11 12">Homodimer (PubMed:22357926, PubMed:7651341). Heterodimer with E(spl)mgamma-HLH and E(spl) (PubMed:22357926). Transcription repression requires formation of a complex with the corepressor protein Groucho (PubMed:8001118). Interacts (via bHLH motif) with sisA (PubMed:7651341). Interacts with da (PubMed:7651341).</text>
</comment>
<comment type="interaction">
    <interactant intactId="EBI-144502">
        <id>Q26263</id>
    </interactant>
    <interactant intactId="EBI-367267">
        <id>Q86PA6</id>
        <label>da</label>
    </interactant>
    <organismsDiffer>false</organismsDiffer>
    <experiments>3</experiments>
</comment>
<comment type="subcellular location">
    <subcellularLocation>
        <location evidence="4">Nucleus</location>
    </subcellularLocation>
</comment>
<comment type="developmental stage">
    <text evidence="4 7">In larvae, expressed in primary neural precursors (at protein level) (PubMed:1427077). In leg imaginal disks, expressed in stripes at the distal edge of each leg segment primordium (at protein level) (PubMed:1427077). In stage 9 embryo, detected in the first neuroblasts delaminating from the ectoderm (at protein level) (PubMed:22357926). In newly hatched larvae, detected in dividing neuroblasts (at protein level) (PubMed:22357926). First detected in preblastoderm cycle 12 in all nuclei (PubMed:1427077). During middle to late cycle 13, expressed in eight stripes that overlap those of the hairy protein (PubMed:1427077).</text>
</comment>
<comment type="domain">
    <text evidence="12">Has a particular type of basic domain (presence of a helix-interrupting proline) that binds to the N-box (CACNAG), rather than the canonical E-box (CANNTG).</text>
</comment>
<comment type="domain">
    <text evidence="12">The C-terminal WRPW motif is a transcriptional repression domain necessary for the interaction with Groucho, a transcriptional corepressor recruited to specific target DNA by Hairy-related proteins.</text>
</comment>
<comment type="disruption phenotype">
    <text evidence="4 6 7 8 10">Lethal at different developmental stages (PubMed:1427077). In late third instar larval brains, results in a complete absence of type II neuroblasts (NBs) and a reduction of type I NBs; after larval hatching, loss of neuroblasts in the ventral nerve cord and specific loss of type I neuroblasts within 48 hours; in the pupae, results in a premature loss of mushroom body NBs (PubMed:21262215, PubMed:22357926, PubMed:23056424). Escaper adult flies display weak motor activity, lethargic behavior, and shortened life span (PubMed:1427077). RNAi-mediated knockdown of the protein in type II neuroblasts lineage results in an increase in the number of type II neuroblasts (PubMed:28899667). Simultaneous RNAi-mediated knockdown of the ETS protein pnt or the transcriptional repressor Erm restores normal neuroblast numbers (PubMed:28899667).</text>
</comment>
<protein>
    <recommendedName>
        <fullName>Protein deadpan</fullName>
    </recommendedName>
</protein>